<name>OFUT2_ARATH</name>
<reference key="1">
    <citation type="journal article" date="2000" name="Nature">
        <title>Sequence and analysis of chromosome 1 of the plant Arabidopsis thaliana.</title>
        <authorList>
            <person name="Theologis A."/>
            <person name="Ecker J.R."/>
            <person name="Palm C.J."/>
            <person name="Federspiel N.A."/>
            <person name="Kaul S."/>
            <person name="White O."/>
            <person name="Alonso J."/>
            <person name="Altafi H."/>
            <person name="Araujo R."/>
            <person name="Bowman C.L."/>
            <person name="Brooks S.Y."/>
            <person name="Buehler E."/>
            <person name="Chan A."/>
            <person name="Chao Q."/>
            <person name="Chen H."/>
            <person name="Cheuk R.F."/>
            <person name="Chin C.W."/>
            <person name="Chung M.K."/>
            <person name="Conn L."/>
            <person name="Conway A.B."/>
            <person name="Conway A.R."/>
            <person name="Creasy T.H."/>
            <person name="Dewar K."/>
            <person name="Dunn P."/>
            <person name="Etgu P."/>
            <person name="Feldblyum T.V."/>
            <person name="Feng J.-D."/>
            <person name="Fong B."/>
            <person name="Fujii C.Y."/>
            <person name="Gill J.E."/>
            <person name="Goldsmith A.D."/>
            <person name="Haas B."/>
            <person name="Hansen N.F."/>
            <person name="Hughes B."/>
            <person name="Huizar L."/>
            <person name="Hunter J.L."/>
            <person name="Jenkins J."/>
            <person name="Johnson-Hopson C."/>
            <person name="Khan S."/>
            <person name="Khaykin E."/>
            <person name="Kim C.J."/>
            <person name="Koo H.L."/>
            <person name="Kremenetskaia I."/>
            <person name="Kurtz D.B."/>
            <person name="Kwan A."/>
            <person name="Lam B."/>
            <person name="Langin-Hooper S."/>
            <person name="Lee A."/>
            <person name="Lee J.M."/>
            <person name="Lenz C.A."/>
            <person name="Li J.H."/>
            <person name="Li Y.-P."/>
            <person name="Lin X."/>
            <person name="Liu S.X."/>
            <person name="Liu Z.A."/>
            <person name="Luros J.S."/>
            <person name="Maiti R."/>
            <person name="Marziali A."/>
            <person name="Militscher J."/>
            <person name="Miranda M."/>
            <person name="Nguyen M."/>
            <person name="Nierman W.C."/>
            <person name="Osborne B.I."/>
            <person name="Pai G."/>
            <person name="Peterson J."/>
            <person name="Pham P.K."/>
            <person name="Rizzo M."/>
            <person name="Rooney T."/>
            <person name="Rowley D."/>
            <person name="Sakano H."/>
            <person name="Salzberg S.L."/>
            <person name="Schwartz J.R."/>
            <person name="Shinn P."/>
            <person name="Southwick A.M."/>
            <person name="Sun H."/>
            <person name="Tallon L.J."/>
            <person name="Tambunga G."/>
            <person name="Toriumi M.J."/>
            <person name="Town C.D."/>
            <person name="Utterback T."/>
            <person name="Van Aken S."/>
            <person name="Vaysberg M."/>
            <person name="Vysotskaia V.S."/>
            <person name="Walker M."/>
            <person name="Wu D."/>
            <person name="Yu G."/>
            <person name="Fraser C.M."/>
            <person name="Venter J.C."/>
            <person name="Davis R.W."/>
        </authorList>
    </citation>
    <scope>NUCLEOTIDE SEQUENCE [LARGE SCALE GENOMIC DNA]</scope>
    <source>
        <strain>cv. Columbia</strain>
    </source>
</reference>
<reference key="2">
    <citation type="journal article" date="2017" name="Plant J.">
        <title>Araport11: a complete reannotation of the Arabidopsis thaliana reference genome.</title>
        <authorList>
            <person name="Cheng C.Y."/>
            <person name="Krishnakumar V."/>
            <person name="Chan A.P."/>
            <person name="Thibaud-Nissen F."/>
            <person name="Schobel S."/>
            <person name="Town C.D."/>
        </authorList>
    </citation>
    <scope>GENOME REANNOTATION</scope>
    <source>
        <strain>cv. Columbia</strain>
    </source>
</reference>
<reference key="3">
    <citation type="submission" date="2005-02" db="EMBL/GenBank/DDBJ databases">
        <authorList>
            <person name="Underwood B.A."/>
            <person name="Xiao Y.-L."/>
            <person name="Moskal W.A. Jr."/>
            <person name="Monaghan E.L."/>
            <person name="Wang W."/>
            <person name="Redman J.C."/>
            <person name="Wu H.C."/>
            <person name="Utterback T."/>
            <person name="Town C.D."/>
        </authorList>
    </citation>
    <scope>NUCLEOTIDE SEQUENCE [LARGE SCALE MRNA]</scope>
    <source>
        <strain>cv. Columbia</strain>
    </source>
</reference>
<reference key="4">
    <citation type="submission" date="2005-07" db="EMBL/GenBank/DDBJ databases">
        <title>Reconstruction of cDNA sequences for hypothetical genes in Arabidopsis thaliana from 5' and 3' RACE products.</title>
        <authorList>
            <person name="Xiao Y."/>
            <person name="Underwood B.A."/>
            <person name="Moskal W."/>
            <person name="Redman J."/>
            <person name="Wang W."/>
            <person name="Monaghan E."/>
            <person name="Wu H.C."/>
            <person name="Utterback T."/>
            <person name="Town C.D."/>
        </authorList>
    </citation>
    <scope>NUCLEOTIDE SEQUENCE [LARGE SCALE MRNA]</scope>
    <source>
        <strain>cv. Columbia</strain>
    </source>
</reference>
<reference key="5">
    <citation type="journal article" date="2012" name="Front. Plant Sci.">
        <title>Plant glycosyltransferases beyond CAZy: a perspective on DUF families.</title>
        <authorList>
            <person name="Hansen S.F."/>
            <person name="Harholt J."/>
            <person name="Oikawa A."/>
            <person name="Scheller H.V."/>
        </authorList>
    </citation>
    <scope>GENE FAMILY</scope>
    <scope>REVIEW</scope>
</reference>
<reference key="6">
    <citation type="journal article" date="2012" name="PLoS ONE">
        <title>The FRIABLE1 gene product affects cell adhesion in Arabidopsis.</title>
        <authorList>
            <person name="Neumetzler L."/>
            <person name="Humphrey T."/>
            <person name="Lumba S."/>
            <person name="Snyder S."/>
            <person name="Yeats T.H."/>
            <person name="Usadel B."/>
            <person name="Vasilevski A."/>
            <person name="Patel J."/>
            <person name="Rose J.K."/>
            <person name="Persson S."/>
            <person name="Bonetta D."/>
        </authorList>
    </citation>
    <scope>GENE FAMILY</scope>
</reference>
<reference key="7">
    <citation type="journal article" date="2012" name="PLoS ONE">
        <title>Identification of putative rhamnogalacturonan-II specific glycosyltransferases in Arabidopsis using a combination of bioinformatics approaches.</title>
        <authorList>
            <person name="Voxeur A."/>
            <person name="Andre A."/>
            <person name="Breton C."/>
            <person name="Lerouge P."/>
        </authorList>
    </citation>
    <scope>GENE FAMILY</scope>
</reference>
<reference key="8">
    <citation type="journal article" date="2013" name="Plant J.">
        <title>Identification of an additional protein involved in mannan biosynthesis.</title>
        <authorList>
            <person name="Wang Y."/>
            <person name="Mortimer J.C."/>
            <person name="Davis J."/>
            <person name="Dupree P."/>
            <person name="Keegstra K."/>
        </authorList>
    </citation>
    <scope>GENE FAMILY</scope>
</reference>
<reference key="9">
    <citation type="journal article" date="2014" name="Plant J.">
        <title>The plant glycosyltransferase clone collection for functional genomics.</title>
        <authorList>
            <person name="Lao J."/>
            <person name="Oikawa A."/>
            <person name="Bromley J.R."/>
            <person name="McInerney P."/>
            <person name="Suttangkakul A."/>
            <person name="Smith-Moritz A.M."/>
            <person name="Plahar H."/>
            <person name="Chiu T.-Y."/>
            <person name="Gonzalez Fernandez-Nino S.M.G."/>
            <person name="Ebert B."/>
            <person name="Yang F."/>
            <person name="Christiansen K.M."/>
            <person name="Hansen S.F."/>
            <person name="Stonebloom S."/>
            <person name="Adams P.D."/>
            <person name="Ronald P.C."/>
            <person name="Hillson N.J."/>
            <person name="Hadi M.Z."/>
            <person name="Vega-Sanchez M.E."/>
            <person name="Loque D."/>
            <person name="Scheller H.V."/>
            <person name="Heazlewood J.L."/>
        </authorList>
    </citation>
    <scope>WEB RESOURCE</scope>
</reference>
<accession>F4IAL1</accession>
<accession>O65380</accession>
<accession>Q5BQ14</accession>
<evidence type="ECO:0000250" key="1">
    <source>
        <dbReference type="UniProtKB" id="Q9H488"/>
    </source>
</evidence>
<evidence type="ECO:0000255" key="2"/>
<evidence type="ECO:0000255" key="3">
    <source>
        <dbReference type="PROSITE-ProRule" id="PRU00498"/>
    </source>
</evidence>
<evidence type="ECO:0000256" key="4">
    <source>
        <dbReference type="SAM" id="MobiDB-lite"/>
    </source>
</evidence>
<evidence type="ECO:0000305" key="5"/>
<evidence type="ECO:0000312" key="6">
    <source>
        <dbReference type="Araport" id="AT1G11990"/>
    </source>
</evidence>
<evidence type="ECO:0000312" key="7">
    <source>
        <dbReference type="EMBL" id="AAC17628.1"/>
    </source>
</evidence>
<dbReference type="EC" id="2.4.1.-" evidence="5"/>
<dbReference type="EMBL" id="AC002131">
    <property type="protein sequence ID" value="AAC17628.1"/>
    <property type="molecule type" value="Genomic_DNA"/>
</dbReference>
<dbReference type="EMBL" id="CP002684">
    <property type="protein sequence ID" value="AEE28824.1"/>
    <property type="molecule type" value="Genomic_DNA"/>
</dbReference>
<dbReference type="EMBL" id="AY924664">
    <property type="protein sequence ID" value="AAX23739.1"/>
    <property type="molecule type" value="mRNA"/>
</dbReference>
<dbReference type="EMBL" id="DQ132647">
    <property type="protein sequence ID" value="AAZ52677.1"/>
    <property type="molecule type" value="mRNA"/>
</dbReference>
<dbReference type="EMBL" id="DQ132648">
    <property type="protein sequence ID" value="AAZ52678.1"/>
    <property type="molecule type" value="mRNA"/>
</dbReference>
<dbReference type="PIR" id="H86254">
    <property type="entry name" value="H86254"/>
</dbReference>
<dbReference type="RefSeq" id="NP_172663.2">
    <molecule id="F4IAL1-1"/>
    <property type="nucleotide sequence ID" value="NM_101071.3"/>
</dbReference>
<dbReference type="FunCoup" id="F4IAL1">
    <property type="interactions" value="1"/>
</dbReference>
<dbReference type="GlyCosmos" id="F4IAL1">
    <property type="glycosylation" value="3 sites, No reported glycans"/>
</dbReference>
<dbReference type="GlyGen" id="F4IAL1">
    <property type="glycosylation" value="3 sites"/>
</dbReference>
<dbReference type="PaxDb" id="3702-AT1G11990.1"/>
<dbReference type="ProteomicsDB" id="250896">
    <molecule id="F4IAL1-1"/>
</dbReference>
<dbReference type="EnsemblPlants" id="AT1G11990.1">
    <molecule id="F4IAL1-1"/>
    <property type="protein sequence ID" value="AT1G11990.1"/>
    <property type="gene ID" value="AT1G11990"/>
</dbReference>
<dbReference type="GeneID" id="837751"/>
<dbReference type="Gramene" id="AT1G11990.1">
    <molecule id="F4IAL1-1"/>
    <property type="protein sequence ID" value="AT1G11990.1"/>
    <property type="gene ID" value="AT1G11990"/>
</dbReference>
<dbReference type="KEGG" id="ath:AT1G11990"/>
<dbReference type="Araport" id="AT1G11990"/>
<dbReference type="TAIR" id="AT1G11990"/>
<dbReference type="eggNOG" id="ENOG502QU78">
    <property type="taxonomic scope" value="Eukaryota"/>
</dbReference>
<dbReference type="HOGENOM" id="CLU_018420_8_0_1"/>
<dbReference type="InParanoid" id="F4IAL1"/>
<dbReference type="PRO" id="PR:F4IAL1"/>
<dbReference type="Proteomes" id="UP000006548">
    <property type="component" value="Chromosome 1"/>
</dbReference>
<dbReference type="ExpressionAtlas" id="F4IAL1">
    <property type="expression patterns" value="baseline and differential"/>
</dbReference>
<dbReference type="GO" id="GO:0016020">
    <property type="term" value="C:membrane"/>
    <property type="evidence" value="ECO:0007669"/>
    <property type="project" value="UniProtKB-SubCell"/>
</dbReference>
<dbReference type="GO" id="GO:0016757">
    <property type="term" value="F:glycosyltransferase activity"/>
    <property type="evidence" value="ECO:0007669"/>
    <property type="project" value="UniProtKB-KW"/>
</dbReference>
<dbReference type="GO" id="GO:0006004">
    <property type="term" value="P:fucose metabolic process"/>
    <property type="evidence" value="ECO:0007669"/>
    <property type="project" value="UniProtKB-KW"/>
</dbReference>
<dbReference type="CDD" id="cd11299">
    <property type="entry name" value="O-FucT_plant"/>
    <property type="match status" value="1"/>
</dbReference>
<dbReference type="InterPro" id="IPR024709">
    <property type="entry name" value="FucosylTrfase_pln"/>
</dbReference>
<dbReference type="InterPro" id="IPR019378">
    <property type="entry name" value="GDP-Fuc_O-FucTrfase"/>
</dbReference>
<dbReference type="InterPro" id="IPR052272">
    <property type="entry name" value="GT106_glycosyltransferase"/>
</dbReference>
<dbReference type="PANTHER" id="PTHR31933:SF9">
    <property type="entry name" value="O-FUCOSYLTRANSFERASE 2"/>
    <property type="match status" value="1"/>
</dbReference>
<dbReference type="PANTHER" id="PTHR31933">
    <property type="entry name" value="O-FUCOSYLTRANSFERASE 2-RELATED"/>
    <property type="match status" value="1"/>
</dbReference>
<dbReference type="Pfam" id="PF10250">
    <property type="entry name" value="O-FucT"/>
    <property type="match status" value="1"/>
</dbReference>
<dbReference type="PIRSF" id="PIRSF009360">
    <property type="entry name" value="UCP009360"/>
    <property type="match status" value="1"/>
</dbReference>
<organism>
    <name type="scientific">Arabidopsis thaliana</name>
    <name type="common">Mouse-ear cress</name>
    <dbReference type="NCBI Taxonomy" id="3702"/>
    <lineage>
        <taxon>Eukaryota</taxon>
        <taxon>Viridiplantae</taxon>
        <taxon>Streptophyta</taxon>
        <taxon>Embryophyta</taxon>
        <taxon>Tracheophyta</taxon>
        <taxon>Spermatophyta</taxon>
        <taxon>Magnoliopsida</taxon>
        <taxon>eudicotyledons</taxon>
        <taxon>Gunneridae</taxon>
        <taxon>Pentapetalae</taxon>
        <taxon>rosids</taxon>
        <taxon>malvids</taxon>
        <taxon>Brassicales</taxon>
        <taxon>Brassicaceae</taxon>
        <taxon>Camelineae</taxon>
        <taxon>Arabidopsis</taxon>
    </lineage>
</organism>
<comment type="pathway">
    <text evidence="5">Glycan metabolism.</text>
</comment>
<comment type="subcellular location">
    <subcellularLocation>
        <location evidence="2">Membrane</location>
        <topology evidence="5">Single-pass type II membrane protein</topology>
    </subcellularLocation>
</comment>
<comment type="alternative products">
    <event type="alternative splicing"/>
    <isoform>
        <id>F4IAL1-1</id>
        <name>1</name>
        <sequence type="displayed"/>
    </isoform>
    <isoform>
        <id>F4IAL1-2</id>
        <name>2</name>
        <sequence type="described" ref="VSP_059166"/>
    </isoform>
    <isoform>
        <id>F4IAL1-3</id>
        <name>3</name>
        <sequence type="described" ref="VSP_059165 VSP_059166"/>
    </isoform>
</comment>
<comment type="similarity">
    <text evidence="5">Belongs to the glycosyltransferase GT106 family.</text>
</comment>
<proteinExistence type="evidence at transcript level"/>
<feature type="chain" id="PRO_0000442065" description="O-fucosyltransferase 2">
    <location>
        <begin position="1"/>
        <end position="590"/>
    </location>
</feature>
<feature type="transmembrane region" description="Helical; Signal-anchor for type II membrane protein" evidence="5">
    <location>
        <begin position="67"/>
        <end position="87"/>
    </location>
</feature>
<feature type="region of interest" description="Disordered" evidence="4">
    <location>
        <begin position="1"/>
        <end position="26"/>
    </location>
</feature>
<feature type="compositionally biased region" description="Basic and acidic residues" evidence="4">
    <location>
        <begin position="1"/>
        <end position="16"/>
    </location>
</feature>
<feature type="binding site" evidence="1">
    <location>
        <begin position="365"/>
        <end position="367"/>
    </location>
    <ligand>
        <name>substrate</name>
    </ligand>
</feature>
<feature type="glycosylation site" description="N-linked (GlcNAc...) asparagine" evidence="3">
    <location>
        <position position="125"/>
    </location>
</feature>
<feature type="glycosylation site" description="N-linked (GlcNAc...) asparagine" evidence="3">
    <location>
        <position position="485"/>
    </location>
</feature>
<feature type="glycosylation site" description="N-linked (GlcNAc...) asparagine" evidence="3">
    <location>
        <position position="546"/>
    </location>
</feature>
<feature type="splice variant" id="VSP_059165" description="In isoform 3.">
    <location>
        <begin position="1"/>
        <end position="284"/>
    </location>
</feature>
<feature type="splice variant" id="VSP_059166" description="In isoform 2 and isoform 3.">
    <original>Y</original>
    <variation>YVAPLDLHLLGPKYASLILDNKSDSPVQEEAASSSSSK</variation>
    <location>
        <position position="360"/>
    </location>
</feature>
<sequence>MGQERPNDEERPESRDLGVYGCSPPHSPRLGPTRFYVFAGDPNPKQTIKRCKRKRIQACNDQRTAKTAIGVMAILGFFCLVNWFMLSRLHEGRVWLRRGLSENPKHVSAQNEERKKFEKQKMKYNGTYGRMLSLATDALAEGMRDNRYCNGFDFEQNKLETKDLWQEPKEQASAWKPCADQRSLTPDDGKNGYIMVTANGGINQQRVAVCNIVVVARLLNAALVIPKFMLSDVWTDASQFGDIYQEEHFMEYLSPDIRIVKELPKELQSLNLEEIGSVVTDIEVMKEAKPDFYMTHILPILLKNRVIHFVGFGNRLAFDPLPFELQRLRCRCNFHALNFVPRIQETAALLVKRLRGSGSYYLALHLRFEIDMVAHSLCYFGGGETEQKELDSYRQKHFPSLSTLTRKKKFRSADVLRTEGLCPLTPEEAVLMLAALGFNRETRVFVAGANIYGGSKRLAVLTSLYPNLVTKEKLLTESELQPFKNFSSQLAALDFIACAAADAFAMTDSGSQLSSLVSGYRIYYGGGKLPTIRPNKRRLSDILLKNSTIEWNVFEKRVRKAIRQTKHVFARPNGRSVYRYPRCKECMCHA</sequence>
<gene>
    <name evidence="5" type="primary">OFUT2</name>
    <name evidence="6" type="ordered locus">At1g11990</name>
    <name evidence="7" type="ORF">F12F1.14</name>
</gene>
<keyword id="KW-0025">Alternative splicing</keyword>
<keyword id="KW-0119">Carbohydrate metabolism</keyword>
<keyword id="KW-0294">Fucose metabolism</keyword>
<keyword id="KW-0325">Glycoprotein</keyword>
<keyword id="KW-0328">Glycosyltransferase</keyword>
<keyword id="KW-0472">Membrane</keyword>
<keyword id="KW-1185">Reference proteome</keyword>
<keyword id="KW-0735">Signal-anchor</keyword>
<keyword id="KW-0808">Transferase</keyword>
<keyword id="KW-0812">Transmembrane</keyword>
<keyword id="KW-1133">Transmembrane helix</keyword>
<protein>
    <recommendedName>
        <fullName evidence="5">O-fucosyltransferase 2</fullName>
        <shortName evidence="5">O-FucT-2</shortName>
        <ecNumber evidence="5">2.4.1.-</ecNumber>
    </recommendedName>
    <alternativeName>
        <fullName evidence="5">O-fucosyltransferase family protein</fullName>
    </alternativeName>
</protein>